<name>GUAA_NEIM0</name>
<gene>
    <name evidence="1" type="primary">guaA</name>
    <name type="ordered locus">NMCC_0299</name>
</gene>
<organism>
    <name type="scientific">Neisseria meningitidis serogroup C (strain 053442)</name>
    <dbReference type="NCBI Taxonomy" id="374833"/>
    <lineage>
        <taxon>Bacteria</taxon>
        <taxon>Pseudomonadati</taxon>
        <taxon>Pseudomonadota</taxon>
        <taxon>Betaproteobacteria</taxon>
        <taxon>Neisseriales</taxon>
        <taxon>Neisseriaceae</taxon>
        <taxon>Neisseria</taxon>
    </lineage>
</organism>
<proteinExistence type="inferred from homology"/>
<keyword id="KW-0067">ATP-binding</keyword>
<keyword id="KW-0315">Glutamine amidotransferase</keyword>
<keyword id="KW-0332">GMP biosynthesis</keyword>
<keyword id="KW-0436">Ligase</keyword>
<keyword id="KW-0547">Nucleotide-binding</keyword>
<keyword id="KW-0658">Purine biosynthesis</keyword>
<evidence type="ECO:0000255" key="1">
    <source>
        <dbReference type="HAMAP-Rule" id="MF_00344"/>
    </source>
</evidence>
<sequence>MTQDKILILDFGSQVTQLIARRVREAHVYCELHSFDMPLDEIKAFNPKGIILSGGPNSVYESDYQADIGIFDLGIPVLGICYGMQFMAHHLGGEVTPGNQREFGYAQVKTIDSGLTRDIYDDAPNTLDVWMSHGDKVSKLPDGFAVIGDTPSCPIAMMENAEKQFYGIQFHPEVTHTKQGRALLNRFVLDICGAQPGWTMPNYIEEAVAKIREQVGSDEVILGLSGGVDSSVAAALIHRAIGDQLTCVFVDHGLLRLNEGKMVMDMFARNLGVKVIHVDAEGQFMAKLAGVTDPEKKRKIIGAEFIEVFDAEEKKLTNAKWLAQGTIYPDVIESAGAKTQKAHAIKSHHNVGGLPENMKLKLLEPLRDLFKDEVRELGVALGLPREMVYRHPFPGPGLGVRILGEVKKEYADLLRQADDIFIQELRNTTDENGTSWYDLTSQAFAVFLPVKSVGVMGDGRTYDYVVALRAVITSDFMTAHWAELPYSLLGRVSNRIINEVKGINRVVYDVSGKPPATIEWE</sequence>
<dbReference type="EC" id="6.3.5.2" evidence="1"/>
<dbReference type="EMBL" id="CP000381">
    <property type="protein sequence ID" value="ABX72507.1"/>
    <property type="molecule type" value="Genomic_DNA"/>
</dbReference>
<dbReference type="RefSeq" id="WP_012221236.1">
    <property type="nucleotide sequence ID" value="NC_010120.1"/>
</dbReference>
<dbReference type="SMR" id="A9M138"/>
<dbReference type="MEROPS" id="C26.957"/>
<dbReference type="KEGG" id="nmn:NMCC_0299"/>
<dbReference type="HOGENOM" id="CLU_014340_0_5_4"/>
<dbReference type="UniPathway" id="UPA00189">
    <property type="reaction ID" value="UER00296"/>
</dbReference>
<dbReference type="Proteomes" id="UP000001177">
    <property type="component" value="Chromosome"/>
</dbReference>
<dbReference type="GO" id="GO:0005829">
    <property type="term" value="C:cytosol"/>
    <property type="evidence" value="ECO:0007669"/>
    <property type="project" value="TreeGrafter"/>
</dbReference>
<dbReference type="GO" id="GO:0005524">
    <property type="term" value="F:ATP binding"/>
    <property type="evidence" value="ECO:0007669"/>
    <property type="project" value="UniProtKB-UniRule"/>
</dbReference>
<dbReference type="GO" id="GO:0003921">
    <property type="term" value="F:GMP synthase activity"/>
    <property type="evidence" value="ECO:0007669"/>
    <property type="project" value="InterPro"/>
</dbReference>
<dbReference type="CDD" id="cd01742">
    <property type="entry name" value="GATase1_GMP_Synthase"/>
    <property type="match status" value="1"/>
</dbReference>
<dbReference type="CDD" id="cd01997">
    <property type="entry name" value="GMP_synthase_C"/>
    <property type="match status" value="1"/>
</dbReference>
<dbReference type="FunFam" id="3.30.300.10:FF:000002">
    <property type="entry name" value="GMP synthase [glutamine-hydrolyzing]"/>
    <property type="match status" value="1"/>
</dbReference>
<dbReference type="FunFam" id="3.40.50.620:FF:000001">
    <property type="entry name" value="GMP synthase [glutamine-hydrolyzing]"/>
    <property type="match status" value="1"/>
</dbReference>
<dbReference type="FunFam" id="3.40.50.880:FF:000001">
    <property type="entry name" value="GMP synthase [glutamine-hydrolyzing]"/>
    <property type="match status" value="1"/>
</dbReference>
<dbReference type="Gene3D" id="3.30.300.10">
    <property type="match status" value="1"/>
</dbReference>
<dbReference type="Gene3D" id="3.40.50.880">
    <property type="match status" value="1"/>
</dbReference>
<dbReference type="Gene3D" id="3.40.50.620">
    <property type="entry name" value="HUPs"/>
    <property type="match status" value="1"/>
</dbReference>
<dbReference type="HAMAP" id="MF_00344">
    <property type="entry name" value="GMP_synthase"/>
    <property type="match status" value="1"/>
</dbReference>
<dbReference type="InterPro" id="IPR029062">
    <property type="entry name" value="Class_I_gatase-like"/>
</dbReference>
<dbReference type="InterPro" id="IPR017926">
    <property type="entry name" value="GATASE"/>
</dbReference>
<dbReference type="InterPro" id="IPR001674">
    <property type="entry name" value="GMP_synth_C"/>
</dbReference>
<dbReference type="InterPro" id="IPR004739">
    <property type="entry name" value="GMP_synth_GATase"/>
</dbReference>
<dbReference type="InterPro" id="IPR022955">
    <property type="entry name" value="GMP_synthase"/>
</dbReference>
<dbReference type="InterPro" id="IPR025777">
    <property type="entry name" value="GMPS_ATP_PPase_dom"/>
</dbReference>
<dbReference type="InterPro" id="IPR022310">
    <property type="entry name" value="NAD/GMP_synthase"/>
</dbReference>
<dbReference type="InterPro" id="IPR014729">
    <property type="entry name" value="Rossmann-like_a/b/a_fold"/>
</dbReference>
<dbReference type="NCBIfam" id="TIGR00884">
    <property type="entry name" value="guaA_Cterm"/>
    <property type="match status" value="1"/>
</dbReference>
<dbReference type="NCBIfam" id="TIGR00888">
    <property type="entry name" value="guaA_Nterm"/>
    <property type="match status" value="1"/>
</dbReference>
<dbReference type="NCBIfam" id="NF000848">
    <property type="entry name" value="PRK00074.1"/>
    <property type="match status" value="1"/>
</dbReference>
<dbReference type="PANTHER" id="PTHR11922:SF2">
    <property type="entry name" value="GMP SYNTHASE [GLUTAMINE-HYDROLYZING]"/>
    <property type="match status" value="1"/>
</dbReference>
<dbReference type="PANTHER" id="PTHR11922">
    <property type="entry name" value="GMP SYNTHASE-RELATED"/>
    <property type="match status" value="1"/>
</dbReference>
<dbReference type="Pfam" id="PF00117">
    <property type="entry name" value="GATase"/>
    <property type="match status" value="1"/>
</dbReference>
<dbReference type="Pfam" id="PF00958">
    <property type="entry name" value="GMP_synt_C"/>
    <property type="match status" value="1"/>
</dbReference>
<dbReference type="Pfam" id="PF02540">
    <property type="entry name" value="NAD_synthase"/>
    <property type="match status" value="1"/>
</dbReference>
<dbReference type="PRINTS" id="PR00097">
    <property type="entry name" value="ANTSNTHASEII"/>
</dbReference>
<dbReference type="PRINTS" id="PR00096">
    <property type="entry name" value="GATASE"/>
</dbReference>
<dbReference type="SUPFAM" id="SSF52402">
    <property type="entry name" value="Adenine nucleotide alpha hydrolases-like"/>
    <property type="match status" value="1"/>
</dbReference>
<dbReference type="SUPFAM" id="SSF52317">
    <property type="entry name" value="Class I glutamine amidotransferase-like"/>
    <property type="match status" value="1"/>
</dbReference>
<dbReference type="SUPFAM" id="SSF54810">
    <property type="entry name" value="GMP synthetase C-terminal dimerisation domain"/>
    <property type="match status" value="1"/>
</dbReference>
<dbReference type="PROSITE" id="PS51273">
    <property type="entry name" value="GATASE_TYPE_1"/>
    <property type="match status" value="1"/>
</dbReference>
<dbReference type="PROSITE" id="PS51553">
    <property type="entry name" value="GMPS_ATP_PPASE"/>
    <property type="match status" value="1"/>
</dbReference>
<feature type="chain" id="PRO_1000120342" description="GMP synthase [glutamine-hydrolyzing]">
    <location>
        <begin position="1"/>
        <end position="521"/>
    </location>
</feature>
<feature type="domain" description="Glutamine amidotransferase type-1" evidence="1">
    <location>
        <begin position="5"/>
        <end position="197"/>
    </location>
</feature>
<feature type="domain" description="GMPS ATP-PPase" evidence="1">
    <location>
        <begin position="198"/>
        <end position="390"/>
    </location>
</feature>
<feature type="active site" description="Nucleophile" evidence="1">
    <location>
        <position position="81"/>
    </location>
</feature>
<feature type="active site" evidence="1">
    <location>
        <position position="171"/>
    </location>
</feature>
<feature type="active site" evidence="1">
    <location>
        <position position="173"/>
    </location>
</feature>
<feature type="binding site" evidence="1">
    <location>
        <begin position="225"/>
        <end position="231"/>
    </location>
    <ligand>
        <name>ATP</name>
        <dbReference type="ChEBI" id="CHEBI:30616"/>
    </ligand>
</feature>
<comment type="function">
    <text evidence="1">Catalyzes the synthesis of GMP from XMP.</text>
</comment>
<comment type="catalytic activity">
    <reaction evidence="1">
        <text>XMP + L-glutamine + ATP + H2O = GMP + L-glutamate + AMP + diphosphate + 2 H(+)</text>
        <dbReference type="Rhea" id="RHEA:11680"/>
        <dbReference type="ChEBI" id="CHEBI:15377"/>
        <dbReference type="ChEBI" id="CHEBI:15378"/>
        <dbReference type="ChEBI" id="CHEBI:29985"/>
        <dbReference type="ChEBI" id="CHEBI:30616"/>
        <dbReference type="ChEBI" id="CHEBI:33019"/>
        <dbReference type="ChEBI" id="CHEBI:57464"/>
        <dbReference type="ChEBI" id="CHEBI:58115"/>
        <dbReference type="ChEBI" id="CHEBI:58359"/>
        <dbReference type="ChEBI" id="CHEBI:456215"/>
        <dbReference type="EC" id="6.3.5.2"/>
    </reaction>
</comment>
<comment type="pathway">
    <text evidence="1">Purine metabolism; GMP biosynthesis; GMP from XMP (L-Gln route): step 1/1.</text>
</comment>
<comment type="subunit">
    <text evidence="1">Homodimer.</text>
</comment>
<reference key="1">
    <citation type="journal article" date="2008" name="Genomics">
        <title>Characterization of ST-4821 complex, a unique Neisseria meningitidis clone.</title>
        <authorList>
            <person name="Peng J."/>
            <person name="Yang L."/>
            <person name="Yang F."/>
            <person name="Yang J."/>
            <person name="Yan Y."/>
            <person name="Nie H."/>
            <person name="Zhang X."/>
            <person name="Xiong Z."/>
            <person name="Jiang Y."/>
            <person name="Cheng F."/>
            <person name="Xu X."/>
            <person name="Chen S."/>
            <person name="Sun L."/>
            <person name="Li W."/>
            <person name="Shen Y."/>
            <person name="Shao Z."/>
            <person name="Liang X."/>
            <person name="Xu J."/>
            <person name="Jin Q."/>
        </authorList>
    </citation>
    <scope>NUCLEOTIDE SEQUENCE [LARGE SCALE GENOMIC DNA]</scope>
    <source>
        <strain>053442</strain>
    </source>
</reference>
<protein>
    <recommendedName>
        <fullName evidence="1">GMP synthase [glutamine-hydrolyzing]</fullName>
        <ecNumber evidence="1">6.3.5.2</ecNumber>
    </recommendedName>
    <alternativeName>
        <fullName evidence="1">GMP synthetase</fullName>
    </alternativeName>
    <alternativeName>
        <fullName evidence="1">Glutamine amidotransferase</fullName>
    </alternativeName>
</protein>
<accession>A9M138</accession>